<feature type="chain" id="PRO_1000164758" description="FMN-dependent NADH:quinone oxidoreductase">
    <location>
        <begin position="1"/>
        <end position="211"/>
    </location>
</feature>
<feature type="binding site" evidence="1">
    <location>
        <begin position="17"/>
        <end position="19"/>
    </location>
    <ligand>
        <name>FMN</name>
        <dbReference type="ChEBI" id="CHEBI:58210"/>
    </ligand>
</feature>
<feature type="binding site" evidence="1">
    <location>
        <begin position="102"/>
        <end position="105"/>
    </location>
    <ligand>
        <name>FMN</name>
        <dbReference type="ChEBI" id="CHEBI:58210"/>
    </ligand>
</feature>
<feature type="binding site" evidence="1">
    <location>
        <begin position="146"/>
        <end position="149"/>
    </location>
    <ligand>
        <name>FMN</name>
        <dbReference type="ChEBI" id="CHEBI:58210"/>
    </ligand>
</feature>
<protein>
    <recommendedName>
        <fullName evidence="1">FMN-dependent NADH:quinone oxidoreductase</fullName>
        <ecNumber evidence="1">1.6.5.-</ecNumber>
    </recommendedName>
    <alternativeName>
        <fullName evidence="1">Azo-dye reductase</fullName>
    </alternativeName>
    <alternativeName>
        <fullName evidence="1">FMN-dependent NADH-azo compound oxidoreductase</fullName>
    </alternativeName>
    <alternativeName>
        <fullName evidence="1">FMN-dependent NADH-azoreductase</fullName>
        <ecNumber evidence="1">1.7.1.17</ecNumber>
    </alternativeName>
</protein>
<proteinExistence type="inferred from homology"/>
<dbReference type="EC" id="1.6.5.-" evidence="1"/>
<dbReference type="EC" id="1.7.1.17" evidence="1"/>
<dbReference type="EMBL" id="AP009484">
    <property type="protein sequence ID" value="BAH16813.1"/>
    <property type="molecule type" value="Genomic_DNA"/>
</dbReference>
<dbReference type="RefSeq" id="WP_012656017.1">
    <property type="nucleotide sequence ID" value="NC_011999.1"/>
</dbReference>
<dbReference type="SMR" id="B9E9A2"/>
<dbReference type="KEGG" id="mcl:MCCL_0106"/>
<dbReference type="eggNOG" id="COG1182">
    <property type="taxonomic scope" value="Bacteria"/>
</dbReference>
<dbReference type="HOGENOM" id="CLU_088964_3_1_9"/>
<dbReference type="OrthoDB" id="9805013at2"/>
<dbReference type="Proteomes" id="UP000001383">
    <property type="component" value="Chromosome"/>
</dbReference>
<dbReference type="GO" id="GO:0009055">
    <property type="term" value="F:electron transfer activity"/>
    <property type="evidence" value="ECO:0007669"/>
    <property type="project" value="UniProtKB-UniRule"/>
</dbReference>
<dbReference type="GO" id="GO:0010181">
    <property type="term" value="F:FMN binding"/>
    <property type="evidence" value="ECO:0007669"/>
    <property type="project" value="UniProtKB-UniRule"/>
</dbReference>
<dbReference type="GO" id="GO:0016652">
    <property type="term" value="F:oxidoreductase activity, acting on NAD(P)H as acceptor"/>
    <property type="evidence" value="ECO:0007669"/>
    <property type="project" value="UniProtKB-UniRule"/>
</dbReference>
<dbReference type="GO" id="GO:0016655">
    <property type="term" value="F:oxidoreductase activity, acting on NAD(P)H, quinone or similar compound as acceptor"/>
    <property type="evidence" value="ECO:0007669"/>
    <property type="project" value="InterPro"/>
</dbReference>
<dbReference type="Gene3D" id="3.40.50.360">
    <property type="match status" value="1"/>
</dbReference>
<dbReference type="HAMAP" id="MF_01216">
    <property type="entry name" value="Azoreductase_type1"/>
    <property type="match status" value="1"/>
</dbReference>
<dbReference type="InterPro" id="IPR003680">
    <property type="entry name" value="Flavodoxin_fold"/>
</dbReference>
<dbReference type="InterPro" id="IPR029039">
    <property type="entry name" value="Flavoprotein-like_sf"/>
</dbReference>
<dbReference type="InterPro" id="IPR050104">
    <property type="entry name" value="FMN-dep_NADH:Q_OxRdtase_AzoR1"/>
</dbReference>
<dbReference type="InterPro" id="IPR023048">
    <property type="entry name" value="NADH:quinone_OxRdtase_FMN_depd"/>
</dbReference>
<dbReference type="NCBIfam" id="NF010075">
    <property type="entry name" value="PRK13556.1"/>
    <property type="match status" value="1"/>
</dbReference>
<dbReference type="PANTHER" id="PTHR43741">
    <property type="entry name" value="FMN-DEPENDENT NADH-AZOREDUCTASE 1"/>
    <property type="match status" value="1"/>
</dbReference>
<dbReference type="PANTHER" id="PTHR43741:SF7">
    <property type="entry name" value="FMN-DEPENDENT NADH:QUINONE OXIDOREDUCTASE"/>
    <property type="match status" value="1"/>
</dbReference>
<dbReference type="Pfam" id="PF02525">
    <property type="entry name" value="Flavodoxin_2"/>
    <property type="match status" value="1"/>
</dbReference>
<dbReference type="SUPFAM" id="SSF52218">
    <property type="entry name" value="Flavoproteins"/>
    <property type="match status" value="1"/>
</dbReference>
<organism>
    <name type="scientific">Macrococcus caseolyticus (strain JCSC5402)</name>
    <name type="common">Macrococcoides caseolyticum</name>
    <dbReference type="NCBI Taxonomy" id="458233"/>
    <lineage>
        <taxon>Bacteria</taxon>
        <taxon>Bacillati</taxon>
        <taxon>Bacillota</taxon>
        <taxon>Bacilli</taxon>
        <taxon>Bacillales</taxon>
        <taxon>Staphylococcaceae</taxon>
        <taxon>Macrococcoides</taxon>
    </lineage>
</organism>
<reference key="1">
    <citation type="journal article" date="2009" name="J. Bacteriol.">
        <title>Complete genome sequence of Macrococcus caseolyticus strain JCSCS5402, reflecting the ancestral genome of the human-pathogenic staphylococci.</title>
        <authorList>
            <person name="Baba T."/>
            <person name="Kuwahara-Arai K."/>
            <person name="Uchiyama I."/>
            <person name="Takeuchi F."/>
            <person name="Ito T."/>
            <person name="Hiramatsu K."/>
        </authorList>
    </citation>
    <scope>NUCLEOTIDE SEQUENCE [LARGE SCALE GENOMIC DNA]</scope>
    <source>
        <strain>JCSC5402</strain>
    </source>
</reference>
<comment type="function">
    <text evidence="1">Quinone reductase that provides resistance to thiol-specific stress caused by electrophilic quinones.</text>
</comment>
<comment type="function">
    <text evidence="1">Also exhibits azoreductase activity. Catalyzes the reductive cleavage of the azo bond in aromatic azo compounds to the corresponding amines.</text>
</comment>
<comment type="catalytic activity">
    <reaction evidence="1">
        <text>2 a quinone + NADH + H(+) = 2 a 1,4-benzosemiquinone + NAD(+)</text>
        <dbReference type="Rhea" id="RHEA:65952"/>
        <dbReference type="ChEBI" id="CHEBI:15378"/>
        <dbReference type="ChEBI" id="CHEBI:57540"/>
        <dbReference type="ChEBI" id="CHEBI:57945"/>
        <dbReference type="ChEBI" id="CHEBI:132124"/>
        <dbReference type="ChEBI" id="CHEBI:134225"/>
    </reaction>
</comment>
<comment type="catalytic activity">
    <reaction evidence="1">
        <text>N,N-dimethyl-1,4-phenylenediamine + anthranilate + 2 NAD(+) = 2-(4-dimethylaminophenyl)diazenylbenzoate + 2 NADH + 2 H(+)</text>
        <dbReference type="Rhea" id="RHEA:55872"/>
        <dbReference type="ChEBI" id="CHEBI:15378"/>
        <dbReference type="ChEBI" id="CHEBI:15783"/>
        <dbReference type="ChEBI" id="CHEBI:16567"/>
        <dbReference type="ChEBI" id="CHEBI:57540"/>
        <dbReference type="ChEBI" id="CHEBI:57945"/>
        <dbReference type="ChEBI" id="CHEBI:71579"/>
        <dbReference type="EC" id="1.7.1.17"/>
    </reaction>
</comment>
<comment type="cofactor">
    <cofactor evidence="1">
        <name>FMN</name>
        <dbReference type="ChEBI" id="CHEBI:58210"/>
    </cofactor>
    <text evidence="1">Binds 1 FMN per subunit.</text>
</comment>
<comment type="subunit">
    <text evidence="1">Homodimer.</text>
</comment>
<comment type="similarity">
    <text evidence="1">Belongs to the azoreductase type 1 family.</text>
</comment>
<sequence length="211" mass="23188">MTKVLYITGHPNDETVSNSMAAGKSFIESYKQSNPDHEVVHIDLYDTFIPLIDKEVFDGWGKLQSGKGFEALSETEQQKVARLNELSDEFAAADKYIFVTPMWNLSFPAVVKAYIDAVAVAGKAFKYTAEGAVGLLTDKKALLIQSRGGIYSEGPAADFELGNRYLQTILGFFGVPSVEELVIEGHNQMPEKAEEIKADGVRRAEALGKTF</sequence>
<keyword id="KW-0285">Flavoprotein</keyword>
<keyword id="KW-0288">FMN</keyword>
<keyword id="KW-0520">NAD</keyword>
<keyword id="KW-0560">Oxidoreductase</keyword>
<keyword id="KW-1185">Reference proteome</keyword>
<gene>
    <name evidence="1" type="primary">azoR</name>
    <name type="ordered locus">MCCL_0106</name>
</gene>
<accession>B9E9A2</accession>
<name>AZOR_MACCJ</name>
<evidence type="ECO:0000255" key="1">
    <source>
        <dbReference type="HAMAP-Rule" id="MF_01216"/>
    </source>
</evidence>